<dbReference type="GO" id="GO:0005576">
    <property type="term" value="C:extracellular region"/>
    <property type="evidence" value="ECO:0007669"/>
    <property type="project" value="UniProtKB-SubCell"/>
</dbReference>
<dbReference type="GO" id="GO:0005179">
    <property type="term" value="F:hormone activity"/>
    <property type="evidence" value="ECO:0007669"/>
    <property type="project" value="UniProtKB-KW"/>
</dbReference>
<dbReference type="GO" id="GO:0007218">
    <property type="term" value="P:neuropeptide signaling pathway"/>
    <property type="evidence" value="ECO:0007669"/>
    <property type="project" value="UniProtKB-KW"/>
</dbReference>
<dbReference type="InterPro" id="IPR013152">
    <property type="entry name" value="Gastrin/cholecystokinin_CS"/>
</dbReference>
<dbReference type="InterPro" id="IPR013259">
    <property type="entry name" value="Sulfakinin"/>
</dbReference>
<dbReference type="Pfam" id="PF08257">
    <property type="entry name" value="Sulfakinin"/>
    <property type="match status" value="1"/>
</dbReference>
<dbReference type="PROSITE" id="PS00259">
    <property type="entry name" value="GASTRIN"/>
    <property type="match status" value="1"/>
</dbReference>
<accession>P85704</accession>
<name>SK1_PERAU</name>
<organism>
    <name type="scientific">Periplaneta australasiae</name>
    <name type="common">Australian cockroach</name>
    <name type="synonym">Blatta australasiae</name>
    <dbReference type="NCBI Taxonomy" id="36975"/>
    <lineage>
        <taxon>Eukaryota</taxon>
        <taxon>Metazoa</taxon>
        <taxon>Ecdysozoa</taxon>
        <taxon>Arthropoda</taxon>
        <taxon>Hexapoda</taxon>
        <taxon>Insecta</taxon>
        <taxon>Pterygota</taxon>
        <taxon>Neoptera</taxon>
        <taxon>Polyneoptera</taxon>
        <taxon>Dictyoptera</taxon>
        <taxon>Blattodea</taxon>
        <taxon>Blattoidea</taxon>
        <taxon>Blattidae</taxon>
        <taxon>Blattinae</taxon>
        <taxon>Periplaneta</taxon>
    </lineage>
</organism>
<proteinExistence type="evidence at protein level"/>
<sequence>EQFDDYGHMRF</sequence>
<protein>
    <recommendedName>
        <fullName evidence="4">Sulfakinin-1</fullName>
        <shortName evidence="4">PerAu-SK-1</shortName>
    </recommendedName>
</protein>
<feature type="peptide" id="PRO_0000378890" description="Sulfakinin-1" evidence="3">
    <location>
        <begin position="1"/>
        <end position="11"/>
    </location>
</feature>
<feature type="modified residue" description="Sulfotyrosine" evidence="1">
    <location>
        <position position="6"/>
    </location>
</feature>
<feature type="modified residue" description="Phenylalanine amide" evidence="3">
    <location>
        <position position="11"/>
    </location>
</feature>
<evidence type="ECO:0000250" key="1">
    <source>
        <dbReference type="UniProtKB" id="P41493"/>
    </source>
</evidence>
<evidence type="ECO:0000255" key="2"/>
<evidence type="ECO:0000269" key="3">
    <source>
    </source>
</evidence>
<evidence type="ECO:0000303" key="4">
    <source>
    </source>
</evidence>
<evidence type="ECO:0000305" key="5"/>
<keyword id="KW-0027">Amidation</keyword>
<keyword id="KW-0903">Direct protein sequencing</keyword>
<keyword id="KW-0372">Hormone</keyword>
<keyword id="KW-0527">Neuropeptide</keyword>
<keyword id="KW-0964">Secreted</keyword>
<keyword id="KW-0765">Sulfation</keyword>
<reference evidence="5" key="1">
    <citation type="journal article" date="2009" name="BMC Evol. Biol.">
        <title>A proteomic approach for studying insect phylogeny: CAPA peptides of ancient insect taxa (Dictyoptera, Blattoptera) as a test case.</title>
        <authorList>
            <person name="Roth S."/>
            <person name="Fromm B."/>
            <person name="Gaede G."/>
            <person name="Predel R."/>
        </authorList>
    </citation>
    <scope>PROTEIN SEQUENCE</scope>
    <scope>AMIDATION AT PHE-11</scope>
    <source>
        <tissue evidence="3">Corpora cardiaca</tissue>
    </source>
</reference>
<comment type="function">
    <text evidence="1">Myotropic peptide.</text>
</comment>
<comment type="subcellular location">
    <subcellularLocation>
        <location evidence="5">Secreted</location>
    </subcellularLocation>
</comment>
<comment type="similarity">
    <text evidence="2">Belongs to the gastrin/cholecystokinin family.</text>
</comment>